<name>NAA50_BOVIN</name>
<organism>
    <name type="scientific">Bos taurus</name>
    <name type="common">Bovine</name>
    <dbReference type="NCBI Taxonomy" id="9913"/>
    <lineage>
        <taxon>Eukaryota</taxon>
        <taxon>Metazoa</taxon>
        <taxon>Chordata</taxon>
        <taxon>Craniata</taxon>
        <taxon>Vertebrata</taxon>
        <taxon>Euteleostomi</taxon>
        <taxon>Mammalia</taxon>
        <taxon>Eutheria</taxon>
        <taxon>Laurasiatheria</taxon>
        <taxon>Artiodactyla</taxon>
        <taxon>Ruminantia</taxon>
        <taxon>Pecora</taxon>
        <taxon>Bovidae</taxon>
        <taxon>Bovinae</taxon>
        <taxon>Bos</taxon>
    </lineage>
</organism>
<comment type="function">
    <text evidence="2">N-alpha-acetyltransferase that acetylates the N-terminus of proteins that retain their initiating methionine (By similarity). Has a broad substrate specificity: able to acetylate the initiator methionine of most peptides, except for those with a proline in second position (By similarity). Also displays N-epsilon-acetyltransferase activity by mediating acetylation of the side chain of specific lysines on proteins (By similarity). Autoacetylates in vivo (By similarity). The relevance of N-epsilon-acetyltransferase activity is however unclear: able to acetylate H4 in vitro, but this result has not been confirmed in vivo (By similarity). Component of N-alpha-acetyltransferase complexes containing NAA10 and NAA15, which has N-alpha-acetyltransferase activity (By similarity). Does not influence the acetyltransferase activity of NAA10 (By similarity). However, it negatively regulates the N-alpha-acetyltransferase activity of the N-terminal acetyltransferase A complex (also called the NatA complex) (By similarity). The multiprotein complexes probably constitute the major contributor for N-terminal acetylation at the ribosome exit tunnel, with NAA10 acetylating all amino termini that are devoid of methionine and NAA50 acetylating other peptides (By similarity). Required for sister chromatid cohesion during mitosis by promoting binding of CDCA5/sororin to cohesin: may act by counteracting the function of NAA10 (By similarity).</text>
</comment>
<comment type="catalytic activity">
    <reaction evidence="2">
        <text>N-terminal L-methionyl-L-alanyl-[protein] + acetyl-CoA = N-terminal N(alpha)-acetyl-L-methionyl-L-alanyl-[protein] + CoA + H(+)</text>
        <dbReference type="Rhea" id="RHEA:50564"/>
        <dbReference type="Rhea" id="RHEA-COMP:12726"/>
        <dbReference type="Rhea" id="RHEA-COMP:12727"/>
        <dbReference type="ChEBI" id="CHEBI:15378"/>
        <dbReference type="ChEBI" id="CHEBI:57287"/>
        <dbReference type="ChEBI" id="CHEBI:57288"/>
        <dbReference type="ChEBI" id="CHEBI:133398"/>
        <dbReference type="ChEBI" id="CHEBI:133399"/>
        <dbReference type="EC" id="2.3.1.258"/>
    </reaction>
</comment>
<comment type="catalytic activity">
    <reaction evidence="2">
        <text>N-terminal L-methionyl-L-seryl-[protein] + acetyl-CoA = N-terminal N(alpha)-acetyl-L-methionyl-L-seryl-[protein] + CoA + H(+)</text>
        <dbReference type="Rhea" id="RHEA:50568"/>
        <dbReference type="Rhea" id="RHEA-COMP:12728"/>
        <dbReference type="Rhea" id="RHEA-COMP:12729"/>
        <dbReference type="ChEBI" id="CHEBI:15378"/>
        <dbReference type="ChEBI" id="CHEBI:57287"/>
        <dbReference type="ChEBI" id="CHEBI:57288"/>
        <dbReference type="ChEBI" id="CHEBI:133400"/>
        <dbReference type="ChEBI" id="CHEBI:133401"/>
        <dbReference type="EC" id="2.3.1.258"/>
    </reaction>
</comment>
<comment type="catalytic activity">
    <reaction evidence="2">
        <text>N-terminal L-methionyl-L-valyl-[protein] + acetyl-CoA = N-terminal N(alpha)-acetyl-L-methionyl-L-valyl-[protein] + CoA + H(+)</text>
        <dbReference type="Rhea" id="RHEA:50572"/>
        <dbReference type="Rhea" id="RHEA-COMP:12730"/>
        <dbReference type="Rhea" id="RHEA-COMP:12731"/>
        <dbReference type="ChEBI" id="CHEBI:15378"/>
        <dbReference type="ChEBI" id="CHEBI:57287"/>
        <dbReference type="ChEBI" id="CHEBI:57288"/>
        <dbReference type="ChEBI" id="CHEBI:133402"/>
        <dbReference type="ChEBI" id="CHEBI:133403"/>
        <dbReference type="EC" id="2.3.1.258"/>
    </reaction>
</comment>
<comment type="catalytic activity">
    <reaction evidence="2">
        <text>N-terminal L-methionyl-L-threonyl-[protein] + acetyl-CoA = N-terminal N(alpha)-acetyl-L-methionyl-L-threonyl-[protein] + CoA + H(+)</text>
        <dbReference type="Rhea" id="RHEA:50576"/>
        <dbReference type="Rhea" id="RHEA-COMP:12732"/>
        <dbReference type="Rhea" id="RHEA-COMP:12733"/>
        <dbReference type="ChEBI" id="CHEBI:15378"/>
        <dbReference type="ChEBI" id="CHEBI:57287"/>
        <dbReference type="ChEBI" id="CHEBI:57288"/>
        <dbReference type="ChEBI" id="CHEBI:133404"/>
        <dbReference type="ChEBI" id="CHEBI:133405"/>
        <dbReference type="EC" id="2.3.1.258"/>
    </reaction>
</comment>
<comment type="catalytic activity">
    <reaction evidence="2">
        <text>N-terminal L-methionyl-L-lysyl-[protein] + acetyl-CoA = N-terminal N(alpha)-acetyl-L-methionyl-L-lysyl-[protein] + CoA + H(+)</text>
        <dbReference type="Rhea" id="RHEA:50580"/>
        <dbReference type="Rhea" id="RHEA-COMP:12734"/>
        <dbReference type="Rhea" id="RHEA-COMP:12735"/>
        <dbReference type="ChEBI" id="CHEBI:15378"/>
        <dbReference type="ChEBI" id="CHEBI:57287"/>
        <dbReference type="ChEBI" id="CHEBI:57288"/>
        <dbReference type="ChEBI" id="CHEBI:133406"/>
        <dbReference type="ChEBI" id="CHEBI:133407"/>
        <dbReference type="EC" id="2.3.1.258"/>
    </reaction>
</comment>
<comment type="catalytic activity">
    <reaction evidence="2">
        <text>N-terminal L-methionyl-L-leucyl-[protein] + acetyl-CoA = N-terminal N(alpha)-acetyl-L-methionyl-L-leucyl-[protein] + CoA + H(+)</text>
        <dbReference type="Rhea" id="RHEA:50520"/>
        <dbReference type="Rhea" id="RHEA-COMP:12711"/>
        <dbReference type="Rhea" id="RHEA-COMP:12712"/>
        <dbReference type="ChEBI" id="CHEBI:15378"/>
        <dbReference type="ChEBI" id="CHEBI:57287"/>
        <dbReference type="ChEBI" id="CHEBI:57288"/>
        <dbReference type="ChEBI" id="CHEBI:133377"/>
        <dbReference type="ChEBI" id="CHEBI:133378"/>
        <dbReference type="EC" id="2.3.1.258"/>
    </reaction>
</comment>
<comment type="catalytic activity">
    <reaction evidence="2">
        <text>N-terminal L-methionyl-L-phenylalanyl-[protein] + acetyl-CoA = N-terminal N(alpha)-acetyl-L-methionyl-L-phenylalanyl-[protein] + CoA + H(+)</text>
        <dbReference type="Rhea" id="RHEA:50528"/>
        <dbReference type="Rhea" id="RHEA-COMP:12715"/>
        <dbReference type="Rhea" id="RHEA-COMP:12716"/>
        <dbReference type="ChEBI" id="CHEBI:15378"/>
        <dbReference type="ChEBI" id="CHEBI:57287"/>
        <dbReference type="ChEBI" id="CHEBI:57288"/>
        <dbReference type="ChEBI" id="CHEBI:133382"/>
        <dbReference type="ChEBI" id="CHEBI:133383"/>
        <dbReference type="EC" id="2.3.1.258"/>
    </reaction>
</comment>
<comment type="catalytic activity">
    <reaction evidence="2">
        <text>N-terminal L-methionyl-L-tyrosyl-[protein] + acetyl-CoA = N-terminal N(alpha)-acetyl-L-methionyl-L-tyrosyl-[protein] + CoA + H(+)</text>
        <dbReference type="Rhea" id="RHEA:50532"/>
        <dbReference type="Rhea" id="RHEA-COMP:12717"/>
        <dbReference type="Rhea" id="RHEA-COMP:12718"/>
        <dbReference type="ChEBI" id="CHEBI:15378"/>
        <dbReference type="ChEBI" id="CHEBI:57287"/>
        <dbReference type="ChEBI" id="CHEBI:57288"/>
        <dbReference type="ChEBI" id="CHEBI:133384"/>
        <dbReference type="ChEBI" id="CHEBI:133385"/>
        <dbReference type="EC" id="2.3.1.258"/>
    </reaction>
</comment>
<comment type="subunit">
    <text evidence="1 2">Component of the N-terminal acetyltransferase E (NatE) complex at least composed of NAA10, NAA15 and NAA50 (By similarity). Interacts with NAA10 (By similarity). Interacts with NAA15 (By similarity). Predominantly interacts with NAA15 in the N-terminal acetyltransferase A complex (NatA complex); the interactions reduce the acetylation activity of the NatA complex (By similarity). Component of the N-terminal acetyltransferase E (NatE)/HYPK complex at least composed of NAA10, NAA15, NAA50 and HYPK (By similarity). Within the complex interacts with NAA15 (By similarity). Its capacity to interact with the NatA complex is reduced by HYPK (By similarity). Interacts with NAA35 (By similarity).</text>
</comment>
<comment type="subcellular location">
    <subcellularLocation>
        <location evidence="2">Cytoplasm</location>
    </subcellularLocation>
    <subcellularLocation>
        <location evidence="2">Nucleus</location>
    </subcellularLocation>
    <text evidence="2">Localizes to the cytoplasm in interphase cells.</text>
</comment>
<comment type="similarity">
    <text evidence="4">Belongs to the acetyltransferase family. GNAT subfamily.</text>
</comment>
<gene>
    <name type="primary">NAA50</name>
    <name type="synonym">NAT13</name>
</gene>
<dbReference type="EC" id="2.3.1.258" evidence="2"/>
<dbReference type="EC" id="2.3.1.-" evidence="2"/>
<dbReference type="EMBL" id="BC122617">
    <property type="protein sequence ID" value="AAI22618.1"/>
    <property type="molecule type" value="mRNA"/>
</dbReference>
<dbReference type="RefSeq" id="NP_001069218.1">
    <property type="nucleotide sequence ID" value="NM_001075750.1"/>
</dbReference>
<dbReference type="RefSeq" id="XP_005201368.1">
    <property type="nucleotide sequence ID" value="XM_005201311.2"/>
</dbReference>
<dbReference type="BMRB" id="Q0IIJ0"/>
<dbReference type="SMR" id="Q0IIJ0"/>
<dbReference type="FunCoup" id="Q0IIJ0">
    <property type="interactions" value="3677"/>
</dbReference>
<dbReference type="STRING" id="9913.ENSBTAP00000031032"/>
<dbReference type="PaxDb" id="9913-ENSBTAP00000031032"/>
<dbReference type="Ensembl" id="ENSBTAT00000031069.5">
    <property type="protein sequence ID" value="ENSBTAP00000031032.4"/>
    <property type="gene ID" value="ENSBTAG00000007784.7"/>
</dbReference>
<dbReference type="Ensembl" id="ENSBTAT00000115525.1">
    <property type="protein sequence ID" value="ENSBTAP00000094224.1"/>
    <property type="gene ID" value="ENSBTAG00000007784.7"/>
</dbReference>
<dbReference type="GeneID" id="517211"/>
<dbReference type="KEGG" id="bta:517211"/>
<dbReference type="CTD" id="80218"/>
<dbReference type="VEuPathDB" id="HostDB:ENSBTAG00000007784"/>
<dbReference type="VGNC" id="VGNC:53590">
    <property type="gene designation" value="NAA50"/>
</dbReference>
<dbReference type="eggNOG" id="KOG3138">
    <property type="taxonomic scope" value="Eukaryota"/>
</dbReference>
<dbReference type="GeneTree" id="ENSGT00390000009110"/>
<dbReference type="HOGENOM" id="CLU_013985_5_3_1"/>
<dbReference type="InParanoid" id="Q0IIJ0"/>
<dbReference type="OMA" id="ICCRLET"/>
<dbReference type="OrthoDB" id="47374at2759"/>
<dbReference type="TreeFam" id="TF314841"/>
<dbReference type="Proteomes" id="UP000009136">
    <property type="component" value="Chromosome 1"/>
</dbReference>
<dbReference type="Bgee" id="ENSBTAG00000007784">
    <property type="expression patterns" value="Expressed in gluteus medius and 105 other cell types or tissues"/>
</dbReference>
<dbReference type="GO" id="GO:0005737">
    <property type="term" value="C:cytoplasm"/>
    <property type="evidence" value="ECO:0000250"/>
    <property type="project" value="UniProtKB"/>
</dbReference>
<dbReference type="GO" id="GO:0005829">
    <property type="term" value="C:cytosol"/>
    <property type="evidence" value="ECO:0000250"/>
    <property type="project" value="UniProtKB"/>
</dbReference>
<dbReference type="GO" id="GO:0031415">
    <property type="term" value="C:NatA complex"/>
    <property type="evidence" value="ECO:0000318"/>
    <property type="project" value="GO_Central"/>
</dbReference>
<dbReference type="GO" id="GO:0005634">
    <property type="term" value="C:nucleus"/>
    <property type="evidence" value="ECO:0000250"/>
    <property type="project" value="UniProtKB"/>
</dbReference>
<dbReference type="GO" id="GO:0010485">
    <property type="term" value="F:histone H4 acetyltransferase activity"/>
    <property type="evidence" value="ECO:0000250"/>
    <property type="project" value="UniProtKB"/>
</dbReference>
<dbReference type="GO" id="GO:0120518">
    <property type="term" value="F:protein N-terminal-methionine acetyltransferase activity"/>
    <property type="evidence" value="ECO:0007669"/>
    <property type="project" value="UniProtKB-EC"/>
</dbReference>
<dbReference type="GO" id="GO:0061733">
    <property type="term" value="F:protein-lysine-acetyltransferase activity"/>
    <property type="evidence" value="ECO:0000250"/>
    <property type="project" value="UniProtKB"/>
</dbReference>
<dbReference type="GO" id="GO:0004596">
    <property type="term" value="F:protein-N-terminal amino-acid acetyltransferase activity"/>
    <property type="evidence" value="ECO:0000250"/>
    <property type="project" value="UniProtKB"/>
</dbReference>
<dbReference type="GO" id="GO:0034087">
    <property type="term" value="P:establishment of mitotic sister chromatid cohesion"/>
    <property type="evidence" value="ECO:0000250"/>
    <property type="project" value="UniProtKB"/>
</dbReference>
<dbReference type="GO" id="GO:0007064">
    <property type="term" value="P:mitotic sister chromatid cohesion"/>
    <property type="evidence" value="ECO:0000318"/>
    <property type="project" value="GO_Central"/>
</dbReference>
<dbReference type="GO" id="GO:0071962">
    <property type="term" value="P:mitotic sister chromatid cohesion, centromeric"/>
    <property type="evidence" value="ECO:0000250"/>
    <property type="project" value="UniProtKB"/>
</dbReference>
<dbReference type="GO" id="GO:0006474">
    <property type="term" value="P:N-terminal protein amino acid acetylation"/>
    <property type="evidence" value="ECO:0000250"/>
    <property type="project" value="UniProtKB"/>
</dbReference>
<dbReference type="CDD" id="cd04301">
    <property type="entry name" value="NAT_SF"/>
    <property type="match status" value="1"/>
</dbReference>
<dbReference type="FunFam" id="3.40.630.30:FF:000078">
    <property type="entry name" value="N-alpha-acetyltransferase 50"/>
    <property type="match status" value="1"/>
</dbReference>
<dbReference type="Gene3D" id="3.40.630.30">
    <property type="match status" value="1"/>
</dbReference>
<dbReference type="InterPro" id="IPR016181">
    <property type="entry name" value="Acyl_CoA_acyltransferase"/>
</dbReference>
<dbReference type="InterPro" id="IPR000182">
    <property type="entry name" value="GNAT_dom"/>
</dbReference>
<dbReference type="InterPro" id="IPR051556">
    <property type="entry name" value="N-term/lysine_N-AcTrnsfr"/>
</dbReference>
<dbReference type="PANTHER" id="PTHR42919">
    <property type="entry name" value="N-ALPHA-ACETYLTRANSFERASE"/>
    <property type="match status" value="1"/>
</dbReference>
<dbReference type="PANTHER" id="PTHR42919:SF41">
    <property type="entry name" value="N-ALPHA-ACETYLTRANSFERASE 50"/>
    <property type="match status" value="1"/>
</dbReference>
<dbReference type="Pfam" id="PF00583">
    <property type="entry name" value="Acetyltransf_1"/>
    <property type="match status" value="1"/>
</dbReference>
<dbReference type="SUPFAM" id="SSF55729">
    <property type="entry name" value="Acyl-CoA N-acyltransferases (Nat)"/>
    <property type="match status" value="1"/>
</dbReference>
<dbReference type="PROSITE" id="PS51186">
    <property type="entry name" value="GNAT"/>
    <property type="match status" value="1"/>
</dbReference>
<protein>
    <recommendedName>
        <fullName>N-alpha-acetyltransferase 50</fullName>
        <ecNumber evidence="2">2.3.1.258</ecNumber>
    </recommendedName>
    <alternativeName>
        <fullName>N-acetyltransferase 13</fullName>
    </alternativeName>
    <alternativeName>
        <fullName evidence="2">N-epsilon-acetyltransferase 50</fullName>
        <ecNumber evidence="2">2.3.1.-</ecNumber>
    </alternativeName>
    <alternativeName>
        <fullName>NatE catalytic subunit</fullName>
    </alternativeName>
</protein>
<feature type="chain" id="PRO_0000284901" description="N-alpha-acetyltransferase 50">
    <location>
        <begin position="1"/>
        <end position="169"/>
    </location>
</feature>
<feature type="domain" description="N-acetyltransferase" evidence="3">
    <location>
        <begin position="6"/>
        <end position="155"/>
    </location>
</feature>
<feature type="region of interest" description="Substrate" evidence="2">
    <location>
        <begin position="138"/>
        <end position="141"/>
    </location>
</feature>
<feature type="active site" evidence="2">
    <location>
        <position position="73"/>
    </location>
</feature>
<feature type="active site" evidence="2">
    <location>
        <position position="112"/>
    </location>
</feature>
<feature type="binding site" evidence="2">
    <location>
        <position position="31"/>
    </location>
    <ligand>
        <name>substrate</name>
    </ligand>
</feature>
<feature type="binding site" evidence="2">
    <location>
        <position position="75"/>
    </location>
    <ligand>
        <name>substrate</name>
    </ligand>
</feature>
<feature type="binding site" evidence="2">
    <location>
        <begin position="77"/>
        <end position="90"/>
    </location>
    <ligand>
        <name>acetyl-CoA</name>
        <dbReference type="ChEBI" id="CHEBI:57288"/>
    </ligand>
</feature>
<feature type="binding site" evidence="2">
    <location>
        <begin position="117"/>
        <end position="126"/>
    </location>
    <ligand>
        <name>CoA</name>
        <dbReference type="ChEBI" id="CHEBI:57287"/>
    </ligand>
</feature>
<feature type="modified residue" description="Phosphothreonine" evidence="2">
    <location>
        <position position="12"/>
    </location>
</feature>
<feature type="modified residue" description="N6-acetyllysine" evidence="2">
    <location>
        <position position="34"/>
    </location>
</feature>
<feature type="modified residue" description="N6-acetyllysine" evidence="2">
    <location>
        <position position="37"/>
    </location>
</feature>
<feature type="modified residue" description="Phosphotyrosine" evidence="2">
    <location>
        <position position="110"/>
    </location>
</feature>
<feature type="modified residue" description="N6-acetyllysine" evidence="2">
    <location>
        <position position="140"/>
    </location>
</feature>
<sequence>MKGSRIELGDVTPHNIKQLKRLNQVIFPVSYNDKFYKDVLEVGELAKLAYFNDIAVGAVCCRVDHSQNQKRLYIMTLGCLAPYRRLGIGTKMLNHVLNICEKDGTFDNIYLHVQISNESAIDFYRKFGFEIIETKKNYYKRIEPADAHVLQKNLKVPSGQNADVQKTDN</sequence>
<accession>Q0IIJ0</accession>
<proteinExistence type="evidence at transcript level"/>
<evidence type="ECO:0000250" key="1">
    <source>
        <dbReference type="UniProtKB" id="Q6PGB6"/>
    </source>
</evidence>
<evidence type="ECO:0000250" key="2">
    <source>
        <dbReference type="UniProtKB" id="Q9GZZ1"/>
    </source>
</evidence>
<evidence type="ECO:0000255" key="3">
    <source>
        <dbReference type="PROSITE-ProRule" id="PRU00532"/>
    </source>
</evidence>
<evidence type="ECO:0000305" key="4"/>
<keyword id="KW-0007">Acetylation</keyword>
<keyword id="KW-0012">Acyltransferase</keyword>
<keyword id="KW-0963">Cytoplasm</keyword>
<keyword id="KW-0539">Nucleus</keyword>
<keyword id="KW-0597">Phosphoprotein</keyword>
<keyword id="KW-1185">Reference proteome</keyword>
<keyword id="KW-0808">Transferase</keyword>
<reference key="1">
    <citation type="submission" date="2006-08" db="EMBL/GenBank/DDBJ databases">
        <authorList>
            <consortium name="NIH - Mammalian Gene Collection (MGC) project"/>
        </authorList>
    </citation>
    <scope>NUCLEOTIDE SEQUENCE [LARGE SCALE MRNA]</scope>
    <source>
        <strain>Hereford</strain>
        <tissue>Fetal muscle</tissue>
    </source>
</reference>